<sequence length="145" mass="16077">MTDIIRQLEAEQAAKIEEKRKLPDFQPGDTVRVQVRVTEGTRTRVQAYEGVCIARSGAGLNENFTVRKISYGEGVERVFPVYSPIVEGVEVVRRGKVRRAKLYYLRGLTGKAARIAEKKDNRTKAERAADKLAAAKAEAAKTAAE</sequence>
<dbReference type="EMBL" id="CP000872">
    <property type="protein sequence ID" value="ABX62941.1"/>
    <property type="molecule type" value="Genomic_DNA"/>
</dbReference>
<dbReference type="RefSeq" id="WP_002964975.1">
    <property type="nucleotide sequence ID" value="NC_010103.1"/>
</dbReference>
<dbReference type="SMR" id="A9M8P3"/>
<dbReference type="GeneID" id="97534805"/>
<dbReference type="KEGG" id="bcs:BCAN_A1951"/>
<dbReference type="HOGENOM" id="CLU_103507_0_2_5"/>
<dbReference type="PhylomeDB" id="A9M8P3"/>
<dbReference type="PRO" id="PR:A9M8P3"/>
<dbReference type="Proteomes" id="UP000001385">
    <property type="component" value="Chromosome I"/>
</dbReference>
<dbReference type="GO" id="GO:0022625">
    <property type="term" value="C:cytosolic large ribosomal subunit"/>
    <property type="evidence" value="ECO:0007669"/>
    <property type="project" value="TreeGrafter"/>
</dbReference>
<dbReference type="GO" id="GO:0003735">
    <property type="term" value="F:structural constituent of ribosome"/>
    <property type="evidence" value="ECO:0007669"/>
    <property type="project" value="InterPro"/>
</dbReference>
<dbReference type="GO" id="GO:0006412">
    <property type="term" value="P:translation"/>
    <property type="evidence" value="ECO:0007669"/>
    <property type="project" value="UniProtKB-UniRule"/>
</dbReference>
<dbReference type="FunFam" id="2.30.30.790:FF:000001">
    <property type="entry name" value="50S ribosomal protein L19"/>
    <property type="match status" value="1"/>
</dbReference>
<dbReference type="Gene3D" id="2.30.30.790">
    <property type="match status" value="1"/>
</dbReference>
<dbReference type="HAMAP" id="MF_00402">
    <property type="entry name" value="Ribosomal_bL19"/>
    <property type="match status" value="1"/>
</dbReference>
<dbReference type="InterPro" id="IPR001857">
    <property type="entry name" value="Ribosomal_bL19"/>
</dbReference>
<dbReference type="InterPro" id="IPR018257">
    <property type="entry name" value="Ribosomal_bL19_CS"/>
</dbReference>
<dbReference type="InterPro" id="IPR038657">
    <property type="entry name" value="Ribosomal_bL19_sf"/>
</dbReference>
<dbReference type="InterPro" id="IPR008991">
    <property type="entry name" value="Translation_prot_SH3-like_sf"/>
</dbReference>
<dbReference type="NCBIfam" id="TIGR01024">
    <property type="entry name" value="rplS_bact"/>
    <property type="match status" value="1"/>
</dbReference>
<dbReference type="PANTHER" id="PTHR15680:SF9">
    <property type="entry name" value="LARGE RIBOSOMAL SUBUNIT PROTEIN BL19M"/>
    <property type="match status" value="1"/>
</dbReference>
<dbReference type="PANTHER" id="PTHR15680">
    <property type="entry name" value="RIBOSOMAL PROTEIN L19"/>
    <property type="match status" value="1"/>
</dbReference>
<dbReference type="Pfam" id="PF01245">
    <property type="entry name" value="Ribosomal_L19"/>
    <property type="match status" value="1"/>
</dbReference>
<dbReference type="PIRSF" id="PIRSF002191">
    <property type="entry name" value="Ribosomal_L19"/>
    <property type="match status" value="1"/>
</dbReference>
<dbReference type="PRINTS" id="PR00061">
    <property type="entry name" value="RIBOSOMALL19"/>
</dbReference>
<dbReference type="SUPFAM" id="SSF50104">
    <property type="entry name" value="Translation proteins SH3-like domain"/>
    <property type="match status" value="1"/>
</dbReference>
<dbReference type="PROSITE" id="PS01015">
    <property type="entry name" value="RIBOSOMAL_L19"/>
    <property type="match status" value="1"/>
</dbReference>
<comment type="function">
    <text evidence="1">This protein is located at the 30S-50S ribosomal subunit interface and may play a role in the structure and function of the aminoacyl-tRNA binding site.</text>
</comment>
<comment type="similarity">
    <text evidence="1">Belongs to the bacterial ribosomal protein bL19 family.</text>
</comment>
<keyword id="KW-1185">Reference proteome</keyword>
<keyword id="KW-0687">Ribonucleoprotein</keyword>
<keyword id="KW-0689">Ribosomal protein</keyword>
<gene>
    <name evidence="1" type="primary">rplS</name>
    <name type="ordered locus">BCAN_A1951</name>
</gene>
<name>RL19_BRUC2</name>
<protein>
    <recommendedName>
        <fullName evidence="1">Large ribosomal subunit protein bL19</fullName>
    </recommendedName>
    <alternativeName>
        <fullName evidence="2">50S ribosomal protein L19</fullName>
    </alternativeName>
</protein>
<reference key="1">
    <citation type="submission" date="2007-10" db="EMBL/GenBank/DDBJ databases">
        <title>Brucella canis ATCC 23365 whole genome shotgun sequencing project.</title>
        <authorList>
            <person name="Setubal J.C."/>
            <person name="Bowns C."/>
            <person name="Boyle S."/>
            <person name="Crasta O.R."/>
            <person name="Czar M.J."/>
            <person name="Dharmanolla C."/>
            <person name="Gillespie J.J."/>
            <person name="Kenyon R.W."/>
            <person name="Lu J."/>
            <person name="Mane S."/>
            <person name="Mohapatra S."/>
            <person name="Nagrani S."/>
            <person name="Purkayastha A."/>
            <person name="Rajasimha H.K."/>
            <person name="Shallom J.M."/>
            <person name="Shallom S."/>
            <person name="Shukla M."/>
            <person name="Snyder E.E."/>
            <person name="Sobral B.W."/>
            <person name="Wattam A.R."/>
            <person name="Will R."/>
            <person name="Williams K."/>
            <person name="Yoo H."/>
            <person name="Bruce D."/>
            <person name="Detter C."/>
            <person name="Munk C."/>
            <person name="Brettin T.S."/>
        </authorList>
    </citation>
    <scope>NUCLEOTIDE SEQUENCE [LARGE SCALE GENOMIC DNA]</scope>
    <source>
        <strain>ATCC 23365 / NCTC 10854 / RM-666</strain>
    </source>
</reference>
<proteinExistence type="inferred from homology"/>
<evidence type="ECO:0000255" key="1">
    <source>
        <dbReference type="HAMAP-Rule" id="MF_00402"/>
    </source>
</evidence>
<evidence type="ECO:0000305" key="2"/>
<feature type="chain" id="PRO_1000080338" description="Large ribosomal subunit protein bL19">
    <location>
        <begin position="1"/>
        <end position="145"/>
    </location>
</feature>
<organism>
    <name type="scientific">Brucella canis (strain ATCC 23365 / NCTC 10854 / RM-666)</name>
    <dbReference type="NCBI Taxonomy" id="483179"/>
    <lineage>
        <taxon>Bacteria</taxon>
        <taxon>Pseudomonadati</taxon>
        <taxon>Pseudomonadota</taxon>
        <taxon>Alphaproteobacteria</taxon>
        <taxon>Hyphomicrobiales</taxon>
        <taxon>Brucellaceae</taxon>
        <taxon>Brucella/Ochrobactrum group</taxon>
        <taxon>Brucella</taxon>
    </lineage>
</organism>
<accession>A9M8P3</accession>